<protein>
    <recommendedName>
        <fullName evidence="1">SsrA-binding protein</fullName>
    </recommendedName>
    <alternativeName>
        <fullName evidence="1">Small protein B</fullName>
    </alternativeName>
</protein>
<comment type="function">
    <text evidence="1">Required for rescue of stalled ribosomes mediated by trans-translation. Binds to transfer-messenger RNA (tmRNA), required for stable association of tmRNA with ribosomes. tmRNA and SmpB together mimic tRNA shape, replacing the anticodon stem-loop with SmpB. tmRNA is encoded by the ssrA gene; the 2 termini fold to resemble tRNA(Ala) and it encodes a 'tag peptide', a short internal open reading frame. During trans-translation Ala-aminoacylated tmRNA acts like a tRNA, entering the A-site of stalled ribosomes, displacing the stalled mRNA. The ribosome then switches to translate the ORF on the tmRNA; the nascent peptide is terminated with the 'tag peptide' encoded by the tmRNA and targeted for degradation. The ribosome is freed to recommence translation, which seems to be the essential function of trans-translation.</text>
</comment>
<comment type="subcellular location">
    <subcellularLocation>
        <location evidence="1">Cytoplasm</location>
    </subcellularLocation>
    <text evidence="1">The tmRNA-SmpB complex associates with stalled 70S ribosomes.</text>
</comment>
<comment type="similarity">
    <text evidence="1">Belongs to the SmpB family.</text>
</comment>
<proteinExistence type="inferred from homology"/>
<reference key="1">
    <citation type="journal article" date="2009" name="Appl. Environ. Microbiol.">
        <title>Genomic analysis of 'Elusimicrobium minutum,' the first cultivated representative of the phylum 'Elusimicrobia' (formerly termite group 1).</title>
        <authorList>
            <person name="Herlemann D.P.R."/>
            <person name="Geissinger O."/>
            <person name="Ikeda-Ohtsubo W."/>
            <person name="Kunin V."/>
            <person name="Sun H."/>
            <person name="Lapidus A."/>
            <person name="Hugenholtz P."/>
            <person name="Brune A."/>
        </authorList>
    </citation>
    <scope>NUCLEOTIDE SEQUENCE [LARGE SCALE GENOMIC DNA]</scope>
    <source>
        <strain>Pei191</strain>
    </source>
</reference>
<evidence type="ECO:0000255" key="1">
    <source>
        <dbReference type="HAMAP-Rule" id="MF_00023"/>
    </source>
</evidence>
<dbReference type="EMBL" id="CP001055">
    <property type="protein sequence ID" value="ACC98079.1"/>
    <property type="molecule type" value="Genomic_DNA"/>
</dbReference>
<dbReference type="RefSeq" id="WP_012414694.1">
    <property type="nucleotide sequence ID" value="NC_010644.1"/>
</dbReference>
<dbReference type="SMR" id="B2KCF8"/>
<dbReference type="STRING" id="445932.Emin_0524"/>
<dbReference type="KEGG" id="emi:Emin_0524"/>
<dbReference type="HOGENOM" id="CLU_108953_0_1_0"/>
<dbReference type="OrthoDB" id="9805462at2"/>
<dbReference type="Proteomes" id="UP000001029">
    <property type="component" value="Chromosome"/>
</dbReference>
<dbReference type="GO" id="GO:0005829">
    <property type="term" value="C:cytosol"/>
    <property type="evidence" value="ECO:0007669"/>
    <property type="project" value="TreeGrafter"/>
</dbReference>
<dbReference type="GO" id="GO:0003723">
    <property type="term" value="F:RNA binding"/>
    <property type="evidence" value="ECO:0007669"/>
    <property type="project" value="UniProtKB-UniRule"/>
</dbReference>
<dbReference type="GO" id="GO:0070929">
    <property type="term" value="P:trans-translation"/>
    <property type="evidence" value="ECO:0007669"/>
    <property type="project" value="UniProtKB-UniRule"/>
</dbReference>
<dbReference type="CDD" id="cd09294">
    <property type="entry name" value="SmpB"/>
    <property type="match status" value="1"/>
</dbReference>
<dbReference type="Gene3D" id="2.40.280.10">
    <property type="match status" value="1"/>
</dbReference>
<dbReference type="HAMAP" id="MF_00023">
    <property type="entry name" value="SmpB"/>
    <property type="match status" value="1"/>
</dbReference>
<dbReference type="InterPro" id="IPR023620">
    <property type="entry name" value="SmpB"/>
</dbReference>
<dbReference type="InterPro" id="IPR000037">
    <property type="entry name" value="SsrA-bd_prot"/>
</dbReference>
<dbReference type="InterPro" id="IPR020081">
    <property type="entry name" value="SsrA-bd_prot_CS"/>
</dbReference>
<dbReference type="NCBIfam" id="NF003843">
    <property type="entry name" value="PRK05422.1"/>
    <property type="match status" value="1"/>
</dbReference>
<dbReference type="NCBIfam" id="TIGR00086">
    <property type="entry name" value="smpB"/>
    <property type="match status" value="1"/>
</dbReference>
<dbReference type="PANTHER" id="PTHR30308:SF2">
    <property type="entry name" value="SSRA-BINDING PROTEIN"/>
    <property type="match status" value="1"/>
</dbReference>
<dbReference type="PANTHER" id="PTHR30308">
    <property type="entry name" value="TMRNA-BINDING COMPONENT OF TRANS-TRANSLATION TAGGING COMPLEX"/>
    <property type="match status" value="1"/>
</dbReference>
<dbReference type="Pfam" id="PF01668">
    <property type="entry name" value="SmpB"/>
    <property type="match status" value="1"/>
</dbReference>
<dbReference type="SUPFAM" id="SSF74982">
    <property type="entry name" value="Small protein B (SmpB)"/>
    <property type="match status" value="1"/>
</dbReference>
<dbReference type="PROSITE" id="PS01317">
    <property type="entry name" value="SSRP"/>
    <property type="match status" value="1"/>
</dbReference>
<organism>
    <name type="scientific">Elusimicrobium minutum (strain Pei191)</name>
    <dbReference type="NCBI Taxonomy" id="445932"/>
    <lineage>
        <taxon>Bacteria</taxon>
        <taxon>Pseudomonadati</taxon>
        <taxon>Elusimicrobiota</taxon>
        <taxon>Elusimicrobia</taxon>
        <taxon>Elusimicrobiales</taxon>
        <taxon>Elusimicrobiaceae</taxon>
        <taxon>Elusimicrobium</taxon>
    </lineage>
</organism>
<accession>B2KCF8</accession>
<keyword id="KW-0963">Cytoplasm</keyword>
<keyword id="KW-1185">Reference proteome</keyword>
<keyword id="KW-0694">RNA-binding</keyword>
<feature type="chain" id="PRO_1000116865" description="SsrA-binding protein">
    <location>
        <begin position="1"/>
        <end position="157"/>
    </location>
</feature>
<gene>
    <name evidence="1" type="primary">smpB</name>
    <name type="ordered locus">Emin_0524</name>
</gene>
<sequence>MAKKDNGPLVAATNRKAYHNYHILDTYEAGIELLGSEVKSIRKKEVSLDGAFVRIEGMQAYVFNMHINPYKYNTVTEVEPLRQRRLLLNKKEINKLKGHAEIKGHTIIPLEVYFKNGWAKIKVGLGKGKQLFDKRDAIKKRDLSREMEKDFKNKIKF</sequence>
<name>SSRP_ELUMP</name>